<evidence type="ECO:0000250" key="1">
    <source>
        <dbReference type="UniProtKB" id="P03901"/>
    </source>
</evidence>
<evidence type="ECO:0000250" key="2">
    <source>
        <dbReference type="UniProtKB" id="P03902"/>
    </source>
</evidence>
<evidence type="ECO:0000255" key="3"/>
<evidence type="ECO:0000305" key="4"/>
<gene>
    <name type="primary">MT-ND4L</name>
    <name type="synonym">MTND4L</name>
    <name type="synonym">NADH4L</name>
    <name type="synonym">ND4L</name>
</gene>
<sequence length="98" mass="10851">MTMVYANIFLAFITSLMGLLMYRSHLMSSLLCLEGMMLSLFVMMTVTILNNHFTLANMAPIVLLVFAACEAALGLSLLVMVSNTYGTDYVQNLNLLQC</sequence>
<dbReference type="EC" id="7.1.1.2"/>
<dbReference type="EMBL" id="AY377234">
    <property type="protein sequence ID" value="AAQ93773.1"/>
    <property type="molecule type" value="Genomic_DNA"/>
</dbReference>
<dbReference type="SMR" id="Q679B0"/>
<dbReference type="GO" id="GO:0005743">
    <property type="term" value="C:mitochondrial inner membrane"/>
    <property type="evidence" value="ECO:0000250"/>
    <property type="project" value="UniProtKB"/>
</dbReference>
<dbReference type="GO" id="GO:0045271">
    <property type="term" value="C:respiratory chain complex I"/>
    <property type="evidence" value="ECO:0000250"/>
    <property type="project" value="UniProtKB"/>
</dbReference>
<dbReference type="GO" id="GO:0008137">
    <property type="term" value="F:NADH dehydrogenase (ubiquinone) activity"/>
    <property type="evidence" value="ECO:0000250"/>
    <property type="project" value="UniProtKB"/>
</dbReference>
<dbReference type="GO" id="GO:0042773">
    <property type="term" value="P:ATP synthesis coupled electron transport"/>
    <property type="evidence" value="ECO:0007669"/>
    <property type="project" value="InterPro"/>
</dbReference>
<dbReference type="FunFam" id="1.10.287.3510:FF:000002">
    <property type="entry name" value="NADH-ubiquinone oxidoreductase chain 4L"/>
    <property type="match status" value="1"/>
</dbReference>
<dbReference type="Gene3D" id="1.10.287.3510">
    <property type="match status" value="1"/>
</dbReference>
<dbReference type="InterPro" id="IPR001133">
    <property type="entry name" value="NADH_UbQ_OxRdtase_chain4L/K"/>
</dbReference>
<dbReference type="InterPro" id="IPR039428">
    <property type="entry name" value="NUOK/Mnh_C1-like"/>
</dbReference>
<dbReference type="PANTHER" id="PTHR11434:SF0">
    <property type="entry name" value="NADH-UBIQUINONE OXIDOREDUCTASE CHAIN 4L"/>
    <property type="match status" value="1"/>
</dbReference>
<dbReference type="PANTHER" id="PTHR11434">
    <property type="entry name" value="NADH-UBIQUINONE OXIDOREDUCTASE SUBUNIT ND4L"/>
    <property type="match status" value="1"/>
</dbReference>
<dbReference type="Pfam" id="PF00420">
    <property type="entry name" value="Oxidored_q2"/>
    <property type="match status" value="1"/>
</dbReference>
<proteinExistence type="inferred from homology"/>
<protein>
    <recommendedName>
        <fullName>NADH-ubiquinone oxidoreductase chain 4L</fullName>
        <ecNumber>7.1.1.2</ecNumber>
    </recommendedName>
    <alternativeName>
        <fullName>NADH dehydrogenase subunit 4L</fullName>
    </alternativeName>
</protein>
<name>NU4LM_MONMN</name>
<geneLocation type="mitochondrion"/>
<reference key="1">
    <citation type="journal article" date="2004" name="Mol. Phylogenet. Evol.">
        <title>A phylogeny of the extant Phocidae inferred from complete mitochondrial DNA coding regions.</title>
        <authorList>
            <person name="Davis C.S."/>
            <person name="Delisle I."/>
            <person name="Stirling I."/>
            <person name="Siniff D.B."/>
            <person name="Strobeck C."/>
        </authorList>
    </citation>
    <scope>NUCLEOTIDE SEQUENCE [GENOMIC DNA]</scope>
</reference>
<keyword id="KW-0249">Electron transport</keyword>
<keyword id="KW-0472">Membrane</keyword>
<keyword id="KW-0496">Mitochondrion</keyword>
<keyword id="KW-0999">Mitochondrion inner membrane</keyword>
<keyword id="KW-0520">NAD</keyword>
<keyword id="KW-0679">Respiratory chain</keyword>
<keyword id="KW-1278">Translocase</keyword>
<keyword id="KW-0812">Transmembrane</keyword>
<keyword id="KW-1133">Transmembrane helix</keyword>
<keyword id="KW-0813">Transport</keyword>
<keyword id="KW-0830">Ubiquinone</keyword>
<comment type="function">
    <text evidence="1">Core subunit of the mitochondrial membrane respiratory chain NADH dehydrogenase (Complex I) which catalyzes electron transfer from NADH through the respiratory chain, using ubiquinone as an electron acceptor. Part of the enzyme membrane arm which is embedded in the lipid bilayer and involved in proton translocation.</text>
</comment>
<comment type="catalytic activity">
    <reaction evidence="1">
        <text>a ubiquinone + NADH + 5 H(+)(in) = a ubiquinol + NAD(+) + 4 H(+)(out)</text>
        <dbReference type="Rhea" id="RHEA:29091"/>
        <dbReference type="Rhea" id="RHEA-COMP:9565"/>
        <dbReference type="Rhea" id="RHEA-COMP:9566"/>
        <dbReference type="ChEBI" id="CHEBI:15378"/>
        <dbReference type="ChEBI" id="CHEBI:16389"/>
        <dbReference type="ChEBI" id="CHEBI:17976"/>
        <dbReference type="ChEBI" id="CHEBI:57540"/>
        <dbReference type="ChEBI" id="CHEBI:57945"/>
        <dbReference type="EC" id="7.1.1.2"/>
    </reaction>
    <physiologicalReaction direction="left-to-right" evidence="1">
        <dbReference type="Rhea" id="RHEA:29092"/>
    </physiologicalReaction>
</comment>
<comment type="subunit">
    <text evidence="2">Core subunit of respiratory chain NADH dehydrogenase (Complex I) which is composed of 45 different subunits.</text>
</comment>
<comment type="subcellular location">
    <subcellularLocation>
        <location evidence="2">Mitochondrion inner membrane</location>
        <topology evidence="3">Multi-pass membrane protein</topology>
    </subcellularLocation>
</comment>
<comment type="similarity">
    <text evidence="4">Belongs to the complex I subunit 4L family.</text>
</comment>
<organism>
    <name type="scientific">Monachus monachus</name>
    <name type="common">Mediterranean monk seal</name>
    <dbReference type="NCBI Taxonomy" id="248254"/>
    <lineage>
        <taxon>Eukaryota</taxon>
        <taxon>Metazoa</taxon>
        <taxon>Chordata</taxon>
        <taxon>Craniata</taxon>
        <taxon>Vertebrata</taxon>
        <taxon>Euteleostomi</taxon>
        <taxon>Mammalia</taxon>
        <taxon>Eutheria</taxon>
        <taxon>Laurasiatheria</taxon>
        <taxon>Carnivora</taxon>
        <taxon>Caniformia</taxon>
        <taxon>Pinnipedia</taxon>
        <taxon>Phocidae</taxon>
        <taxon>Monachinae</taxon>
        <taxon>Monachini</taxon>
        <taxon>Monachus</taxon>
    </lineage>
</organism>
<feature type="chain" id="PRO_0000275067" description="NADH-ubiquinone oxidoreductase chain 4L">
    <location>
        <begin position="1"/>
        <end position="98"/>
    </location>
</feature>
<feature type="transmembrane region" description="Helical" evidence="3">
    <location>
        <begin position="1"/>
        <end position="21"/>
    </location>
</feature>
<feature type="transmembrane region" description="Helical" evidence="3">
    <location>
        <begin position="29"/>
        <end position="49"/>
    </location>
</feature>
<feature type="transmembrane region" description="Helical" evidence="3">
    <location>
        <begin position="61"/>
        <end position="81"/>
    </location>
</feature>
<accession>Q679B0</accession>